<dbReference type="EC" id="2.3.1.234" evidence="1"/>
<dbReference type="EMBL" id="AE017243">
    <property type="protein sequence ID" value="AAZ44719.1"/>
    <property type="molecule type" value="Genomic_DNA"/>
</dbReference>
<dbReference type="RefSeq" id="WP_011206487.1">
    <property type="nucleotide sequence ID" value="NC_007295.1"/>
</dbReference>
<dbReference type="SMR" id="Q4A952"/>
<dbReference type="GeneID" id="41334937"/>
<dbReference type="KEGG" id="mhj:MHJ_0636"/>
<dbReference type="eggNOG" id="COG0533">
    <property type="taxonomic scope" value="Bacteria"/>
</dbReference>
<dbReference type="HOGENOM" id="CLU_023208_0_1_14"/>
<dbReference type="OrthoDB" id="9806197at2"/>
<dbReference type="Proteomes" id="UP000000548">
    <property type="component" value="Chromosome"/>
</dbReference>
<dbReference type="GO" id="GO:0005737">
    <property type="term" value="C:cytoplasm"/>
    <property type="evidence" value="ECO:0007669"/>
    <property type="project" value="UniProtKB-SubCell"/>
</dbReference>
<dbReference type="GO" id="GO:0005506">
    <property type="term" value="F:iron ion binding"/>
    <property type="evidence" value="ECO:0007669"/>
    <property type="project" value="UniProtKB-UniRule"/>
</dbReference>
<dbReference type="GO" id="GO:0061711">
    <property type="term" value="F:N(6)-L-threonylcarbamoyladenine synthase activity"/>
    <property type="evidence" value="ECO:0007669"/>
    <property type="project" value="UniProtKB-EC"/>
</dbReference>
<dbReference type="GO" id="GO:0002949">
    <property type="term" value="P:tRNA threonylcarbamoyladenosine modification"/>
    <property type="evidence" value="ECO:0007669"/>
    <property type="project" value="UniProtKB-UniRule"/>
</dbReference>
<dbReference type="Gene3D" id="3.30.420.40">
    <property type="match status" value="2"/>
</dbReference>
<dbReference type="HAMAP" id="MF_01445">
    <property type="entry name" value="TsaD"/>
    <property type="match status" value="1"/>
</dbReference>
<dbReference type="InterPro" id="IPR043129">
    <property type="entry name" value="ATPase_NBD"/>
</dbReference>
<dbReference type="InterPro" id="IPR000905">
    <property type="entry name" value="Gcp-like_dom"/>
</dbReference>
<dbReference type="InterPro" id="IPR017861">
    <property type="entry name" value="KAE1/TsaD"/>
</dbReference>
<dbReference type="InterPro" id="IPR022450">
    <property type="entry name" value="TsaD"/>
</dbReference>
<dbReference type="NCBIfam" id="TIGR00329">
    <property type="entry name" value="gcp_kae1"/>
    <property type="match status" value="1"/>
</dbReference>
<dbReference type="NCBIfam" id="TIGR03723">
    <property type="entry name" value="T6A_TsaD_YgjD"/>
    <property type="match status" value="1"/>
</dbReference>
<dbReference type="PANTHER" id="PTHR11735">
    <property type="entry name" value="TRNA N6-ADENOSINE THREONYLCARBAMOYLTRANSFERASE"/>
    <property type="match status" value="1"/>
</dbReference>
<dbReference type="PANTHER" id="PTHR11735:SF6">
    <property type="entry name" value="TRNA N6-ADENOSINE THREONYLCARBAMOYLTRANSFERASE, MITOCHONDRIAL"/>
    <property type="match status" value="1"/>
</dbReference>
<dbReference type="Pfam" id="PF00814">
    <property type="entry name" value="TsaD"/>
    <property type="match status" value="1"/>
</dbReference>
<dbReference type="PRINTS" id="PR00789">
    <property type="entry name" value="OSIALOPTASE"/>
</dbReference>
<dbReference type="SUPFAM" id="SSF53067">
    <property type="entry name" value="Actin-like ATPase domain"/>
    <property type="match status" value="1"/>
</dbReference>
<protein>
    <recommendedName>
        <fullName evidence="1">tRNA N6-adenosine threonylcarbamoyltransferase</fullName>
        <ecNumber evidence="1">2.3.1.234</ecNumber>
    </recommendedName>
    <alternativeName>
        <fullName evidence="1">N6-L-threonylcarbamoyladenine synthase</fullName>
        <shortName evidence="1">t(6)A synthase</shortName>
    </alternativeName>
    <alternativeName>
        <fullName evidence="1">t(6)A37 threonylcarbamoyladenosine biosynthesis protein TsaD</fullName>
    </alternativeName>
    <alternativeName>
        <fullName evidence="1">tRNA threonylcarbamoyladenosine biosynthesis protein TsaD</fullName>
    </alternativeName>
</protein>
<sequence length="322" mass="35961">MKILGIETSHDDASVALFSENKVEILLTISQFELHEQFGGTVPELASREHSRNLAIILEKLLGKNIDFSTIDAIAYTKNPGLIGPLKIGFLFASALSLFFNKPLIPIDHLLGHFWSAAIENDLEFPVLSLLISGGHTQLIFAENKNNLEIIGSTVDDALGEIYDKIGRSLGCGYPGGPKIDLIWQQNNVRNMELIDFSLPKVLENPLDFSFSGLKTQVINYTNNLKENYLFSQKKVVEIAVSFQKTVIKYLKRQLDLALKTKKNVKTITLVGGVAANSEIRKLIKTYENKYKVVIPKKEFCTDNGAMIAKAAQIFLKFNEEK</sequence>
<gene>
    <name evidence="1" type="primary">tsaD</name>
    <name type="synonym">gcp</name>
    <name type="ordered locus">MHJ_0636</name>
</gene>
<proteinExistence type="inferred from homology"/>
<name>TSAD_MESHJ</name>
<accession>Q4A952</accession>
<comment type="function">
    <text evidence="1">Required for the formation of a threonylcarbamoyl group on adenosine at position 37 (t(6)A37) in tRNAs that read codons beginning with adenine. Is involved in the transfer of the threonylcarbamoyl moiety of threonylcarbamoyl-AMP (TC-AMP) to the N6 group of A37, together with TsaE and TsaB. TsaD likely plays a direct catalytic role in this reaction.</text>
</comment>
<comment type="catalytic activity">
    <reaction evidence="1">
        <text>L-threonylcarbamoyladenylate + adenosine(37) in tRNA = N(6)-L-threonylcarbamoyladenosine(37) in tRNA + AMP + H(+)</text>
        <dbReference type="Rhea" id="RHEA:37059"/>
        <dbReference type="Rhea" id="RHEA-COMP:10162"/>
        <dbReference type="Rhea" id="RHEA-COMP:10163"/>
        <dbReference type="ChEBI" id="CHEBI:15378"/>
        <dbReference type="ChEBI" id="CHEBI:73682"/>
        <dbReference type="ChEBI" id="CHEBI:74411"/>
        <dbReference type="ChEBI" id="CHEBI:74418"/>
        <dbReference type="ChEBI" id="CHEBI:456215"/>
        <dbReference type="EC" id="2.3.1.234"/>
    </reaction>
</comment>
<comment type="cofactor">
    <cofactor evidence="1">
        <name>Fe(2+)</name>
        <dbReference type="ChEBI" id="CHEBI:29033"/>
    </cofactor>
    <text evidence="1">Binds 1 Fe(2+) ion per subunit.</text>
</comment>
<comment type="subcellular location">
    <subcellularLocation>
        <location evidence="1">Cytoplasm</location>
    </subcellularLocation>
</comment>
<comment type="similarity">
    <text evidence="1">Belongs to the KAE1 / TsaD family.</text>
</comment>
<feature type="chain" id="PRO_0000303442" description="tRNA N6-adenosine threonylcarbamoyltransferase">
    <location>
        <begin position="1"/>
        <end position="322"/>
    </location>
</feature>
<feature type="binding site" evidence="1">
    <location>
        <position position="109"/>
    </location>
    <ligand>
        <name>Fe cation</name>
        <dbReference type="ChEBI" id="CHEBI:24875"/>
    </ligand>
</feature>
<feature type="binding site" evidence="1">
    <location>
        <position position="113"/>
    </location>
    <ligand>
        <name>Fe cation</name>
        <dbReference type="ChEBI" id="CHEBI:24875"/>
    </ligand>
</feature>
<feature type="binding site" evidence="1">
    <location>
        <begin position="131"/>
        <end position="135"/>
    </location>
    <ligand>
        <name>substrate</name>
    </ligand>
</feature>
<feature type="binding site" evidence="1">
    <location>
        <position position="164"/>
    </location>
    <ligand>
        <name>substrate</name>
    </ligand>
</feature>
<feature type="binding site" evidence="1">
    <location>
        <position position="177"/>
    </location>
    <ligand>
        <name>substrate</name>
    </ligand>
</feature>
<feature type="binding site" evidence="1">
    <location>
        <position position="181"/>
    </location>
    <ligand>
        <name>substrate</name>
    </ligand>
</feature>
<feature type="binding site" evidence="1">
    <location>
        <position position="277"/>
    </location>
    <ligand>
        <name>substrate</name>
    </ligand>
</feature>
<feature type="binding site" evidence="1">
    <location>
        <position position="303"/>
    </location>
    <ligand>
        <name>Fe cation</name>
        <dbReference type="ChEBI" id="CHEBI:24875"/>
    </ligand>
</feature>
<organism>
    <name type="scientific">Mesomycoplasma hyopneumoniae (strain J / ATCC 25934 / NCTC 10110)</name>
    <name type="common">Mycoplasma hyopneumoniae</name>
    <dbReference type="NCBI Taxonomy" id="262719"/>
    <lineage>
        <taxon>Bacteria</taxon>
        <taxon>Bacillati</taxon>
        <taxon>Mycoplasmatota</taxon>
        <taxon>Mycoplasmoidales</taxon>
        <taxon>Metamycoplasmataceae</taxon>
        <taxon>Mesomycoplasma</taxon>
    </lineage>
</organism>
<keyword id="KW-0012">Acyltransferase</keyword>
<keyword id="KW-0963">Cytoplasm</keyword>
<keyword id="KW-0408">Iron</keyword>
<keyword id="KW-0479">Metal-binding</keyword>
<keyword id="KW-0808">Transferase</keyword>
<keyword id="KW-0819">tRNA processing</keyword>
<evidence type="ECO:0000255" key="1">
    <source>
        <dbReference type="HAMAP-Rule" id="MF_01445"/>
    </source>
</evidence>
<reference key="1">
    <citation type="journal article" date="2005" name="J. Bacteriol.">
        <title>Swine and poultry pathogens: the complete genome sequences of two strains of Mycoplasma hyopneumoniae and a strain of Mycoplasma synoviae.</title>
        <authorList>
            <person name="Vasconcelos A.T.R."/>
            <person name="Ferreira H.B."/>
            <person name="Bizarro C.V."/>
            <person name="Bonatto S.L."/>
            <person name="Carvalho M.O."/>
            <person name="Pinto P.M."/>
            <person name="Almeida D.F."/>
            <person name="Almeida L.G.P."/>
            <person name="Almeida R."/>
            <person name="Alves-Junior L."/>
            <person name="Assuncao E.N."/>
            <person name="Azevedo V.A.C."/>
            <person name="Bogo M.R."/>
            <person name="Brigido M.M."/>
            <person name="Brocchi M."/>
            <person name="Burity H.A."/>
            <person name="Camargo A.A."/>
            <person name="Camargo S.S."/>
            <person name="Carepo M.S."/>
            <person name="Carraro D.M."/>
            <person name="de Mattos Cascardo J.C."/>
            <person name="Castro L.A."/>
            <person name="Cavalcanti G."/>
            <person name="Chemale G."/>
            <person name="Collevatti R.G."/>
            <person name="Cunha C.W."/>
            <person name="Dallagiovanna B."/>
            <person name="Dambros B.P."/>
            <person name="Dellagostin O.A."/>
            <person name="Falcao C."/>
            <person name="Fantinatti-Garboggini F."/>
            <person name="Felipe M.S.S."/>
            <person name="Fiorentin L."/>
            <person name="Franco G.R."/>
            <person name="Freitas N.S.A."/>
            <person name="Frias D."/>
            <person name="Grangeiro T.B."/>
            <person name="Grisard E.C."/>
            <person name="Guimaraes C.T."/>
            <person name="Hungria M."/>
            <person name="Jardim S.N."/>
            <person name="Krieger M.A."/>
            <person name="Laurino J.P."/>
            <person name="Lima L.F.A."/>
            <person name="Lopes M.I."/>
            <person name="Loreto E.L.S."/>
            <person name="Madeira H.M.F."/>
            <person name="Manfio G.P."/>
            <person name="Maranhao A.Q."/>
            <person name="Martinkovics C.T."/>
            <person name="Medeiros S.R.B."/>
            <person name="Moreira M.A.M."/>
            <person name="Neiva M."/>
            <person name="Ramalho-Neto C.E."/>
            <person name="Nicolas M.F."/>
            <person name="Oliveira S.C."/>
            <person name="Paixao R.F.C."/>
            <person name="Pedrosa F.O."/>
            <person name="Pena S.D.J."/>
            <person name="Pereira M."/>
            <person name="Pereira-Ferrari L."/>
            <person name="Piffer I."/>
            <person name="Pinto L.S."/>
            <person name="Potrich D.P."/>
            <person name="Salim A.C.M."/>
            <person name="Santos F.R."/>
            <person name="Schmitt R."/>
            <person name="Schneider M.P.C."/>
            <person name="Schrank A."/>
            <person name="Schrank I.S."/>
            <person name="Schuck A.F."/>
            <person name="Seuanez H.N."/>
            <person name="Silva D.W."/>
            <person name="Silva R."/>
            <person name="Silva S.C."/>
            <person name="Soares C.M.A."/>
            <person name="Souza K.R.L."/>
            <person name="Souza R.C."/>
            <person name="Staats C.C."/>
            <person name="Steffens M.B.R."/>
            <person name="Teixeira S.M.R."/>
            <person name="Urmenyi T.P."/>
            <person name="Vainstein M.H."/>
            <person name="Zuccherato L.W."/>
            <person name="Simpson A.J.G."/>
            <person name="Zaha A."/>
        </authorList>
    </citation>
    <scope>NUCLEOTIDE SEQUENCE [LARGE SCALE GENOMIC DNA]</scope>
    <source>
        <strain>J / ATCC 25934 / NCTC 10110</strain>
    </source>
</reference>